<feature type="chain" id="PRO_0000230899" description="Transcriptional repressor NrdR">
    <location>
        <begin position="1"/>
        <end position="164"/>
    </location>
</feature>
<feature type="domain" description="ATP-cone" evidence="1">
    <location>
        <begin position="49"/>
        <end position="139"/>
    </location>
</feature>
<feature type="zinc finger region" evidence="1">
    <location>
        <begin position="3"/>
        <end position="34"/>
    </location>
</feature>
<sequence length="164" mass="19131">MRCPKCNYHKSSVVDSRQAEDGNTIRRRRECEQCHTRFTTFERVEELPLLVIKKDGTREQFSRDKILNGVVQSAQKRPVSSTDIENVISRIEQEVRTTYENEVSSTAIGNLVMDELAELDEITYVRFASVYKSFKDVDEIEELLQQITNRVRGKKKRLNNDETN</sequence>
<keyword id="KW-0067">ATP-binding</keyword>
<keyword id="KW-0238">DNA-binding</keyword>
<keyword id="KW-0479">Metal-binding</keyword>
<keyword id="KW-0547">Nucleotide-binding</keyword>
<keyword id="KW-0678">Repressor</keyword>
<keyword id="KW-0804">Transcription</keyword>
<keyword id="KW-0805">Transcription regulation</keyword>
<keyword id="KW-0862">Zinc</keyword>
<keyword id="KW-0863">Zinc-finger</keyword>
<dbReference type="EMBL" id="CP000056">
    <property type="protein sequence ID" value="AAX71390.1"/>
    <property type="molecule type" value="Genomic_DNA"/>
</dbReference>
<dbReference type="RefSeq" id="WP_002985941.1">
    <property type="nucleotide sequence ID" value="NC_007296.2"/>
</dbReference>
<dbReference type="SMR" id="Q48V66"/>
<dbReference type="GeneID" id="69901381"/>
<dbReference type="KEGG" id="spb:M28_Spy0276"/>
<dbReference type="HOGENOM" id="CLU_108412_0_0_9"/>
<dbReference type="GO" id="GO:0005524">
    <property type="term" value="F:ATP binding"/>
    <property type="evidence" value="ECO:0007669"/>
    <property type="project" value="UniProtKB-KW"/>
</dbReference>
<dbReference type="GO" id="GO:0003677">
    <property type="term" value="F:DNA binding"/>
    <property type="evidence" value="ECO:0007669"/>
    <property type="project" value="UniProtKB-KW"/>
</dbReference>
<dbReference type="GO" id="GO:0008270">
    <property type="term" value="F:zinc ion binding"/>
    <property type="evidence" value="ECO:0007669"/>
    <property type="project" value="UniProtKB-UniRule"/>
</dbReference>
<dbReference type="GO" id="GO:0045892">
    <property type="term" value="P:negative regulation of DNA-templated transcription"/>
    <property type="evidence" value="ECO:0007669"/>
    <property type="project" value="UniProtKB-UniRule"/>
</dbReference>
<dbReference type="HAMAP" id="MF_00440">
    <property type="entry name" value="NrdR"/>
    <property type="match status" value="1"/>
</dbReference>
<dbReference type="InterPro" id="IPR005144">
    <property type="entry name" value="ATP-cone_dom"/>
</dbReference>
<dbReference type="InterPro" id="IPR055173">
    <property type="entry name" value="NrdR-like_N"/>
</dbReference>
<dbReference type="InterPro" id="IPR003796">
    <property type="entry name" value="RNR_NrdR-like"/>
</dbReference>
<dbReference type="NCBIfam" id="TIGR00244">
    <property type="entry name" value="transcriptional regulator NrdR"/>
    <property type="match status" value="1"/>
</dbReference>
<dbReference type="PANTHER" id="PTHR30455">
    <property type="entry name" value="TRANSCRIPTIONAL REPRESSOR NRDR"/>
    <property type="match status" value="1"/>
</dbReference>
<dbReference type="PANTHER" id="PTHR30455:SF2">
    <property type="entry name" value="TRANSCRIPTIONAL REPRESSOR NRDR"/>
    <property type="match status" value="1"/>
</dbReference>
<dbReference type="Pfam" id="PF03477">
    <property type="entry name" value="ATP-cone"/>
    <property type="match status" value="1"/>
</dbReference>
<dbReference type="Pfam" id="PF22811">
    <property type="entry name" value="Zn_ribbon_NrdR"/>
    <property type="match status" value="1"/>
</dbReference>
<dbReference type="PROSITE" id="PS51161">
    <property type="entry name" value="ATP_CONE"/>
    <property type="match status" value="1"/>
</dbReference>
<reference key="1">
    <citation type="journal article" date="2005" name="J. Infect. Dis.">
        <title>Genome sequence of a serotype M28 strain of group A Streptococcus: potential new insights into puerperal sepsis and bacterial disease specificity.</title>
        <authorList>
            <person name="Green N.M."/>
            <person name="Zhang S."/>
            <person name="Porcella S.F."/>
            <person name="Nagiec M.J."/>
            <person name="Barbian K.D."/>
            <person name="Beres S.B."/>
            <person name="Lefebvre R.B."/>
            <person name="Musser J.M."/>
        </authorList>
    </citation>
    <scope>NUCLEOTIDE SEQUENCE [LARGE SCALE GENOMIC DNA]</scope>
    <source>
        <strain>MGAS6180</strain>
    </source>
</reference>
<protein>
    <recommendedName>
        <fullName evidence="1">Transcriptional repressor NrdR</fullName>
    </recommendedName>
</protein>
<evidence type="ECO:0000255" key="1">
    <source>
        <dbReference type="HAMAP-Rule" id="MF_00440"/>
    </source>
</evidence>
<proteinExistence type="inferred from homology"/>
<gene>
    <name evidence="1" type="primary">nrdR</name>
    <name type="ordered locus">M28_Spy0276</name>
</gene>
<organism>
    <name type="scientific">Streptococcus pyogenes serotype M28 (strain MGAS6180)</name>
    <dbReference type="NCBI Taxonomy" id="319701"/>
    <lineage>
        <taxon>Bacteria</taxon>
        <taxon>Bacillati</taxon>
        <taxon>Bacillota</taxon>
        <taxon>Bacilli</taxon>
        <taxon>Lactobacillales</taxon>
        <taxon>Streptococcaceae</taxon>
        <taxon>Streptococcus</taxon>
    </lineage>
</organism>
<comment type="function">
    <text evidence="1">Negatively regulates transcription of bacterial ribonucleotide reductase nrd genes and operons by binding to NrdR-boxes.</text>
</comment>
<comment type="cofactor">
    <cofactor evidence="1">
        <name>Zn(2+)</name>
        <dbReference type="ChEBI" id="CHEBI:29105"/>
    </cofactor>
    <text evidence="1">Binds 1 zinc ion.</text>
</comment>
<comment type="similarity">
    <text evidence="1">Belongs to the NrdR family.</text>
</comment>
<accession>Q48V66</accession>
<name>NRDR_STRPM</name>